<gene>
    <name evidence="1" type="primary">rplL</name>
    <name type="ordered locus">azo3425</name>
</gene>
<keyword id="KW-1185">Reference proteome</keyword>
<keyword id="KW-0687">Ribonucleoprotein</keyword>
<keyword id="KW-0689">Ribosomal protein</keyword>
<organism>
    <name type="scientific">Azoarcus sp. (strain BH72)</name>
    <dbReference type="NCBI Taxonomy" id="418699"/>
    <lineage>
        <taxon>Bacteria</taxon>
        <taxon>Pseudomonadati</taxon>
        <taxon>Pseudomonadota</taxon>
        <taxon>Betaproteobacteria</taxon>
        <taxon>Rhodocyclales</taxon>
        <taxon>Zoogloeaceae</taxon>
        <taxon>Azoarcus</taxon>
    </lineage>
</organism>
<feature type="chain" id="PRO_1000006957" description="Large ribosomal subunit protein bL12">
    <location>
        <begin position="1"/>
        <end position="125"/>
    </location>
</feature>
<dbReference type="EMBL" id="AM406670">
    <property type="protein sequence ID" value="CAL96041.1"/>
    <property type="molecule type" value="Genomic_DNA"/>
</dbReference>
<dbReference type="RefSeq" id="WP_011767148.1">
    <property type="nucleotide sequence ID" value="NC_008702.1"/>
</dbReference>
<dbReference type="SMR" id="A1KB35"/>
<dbReference type="STRING" id="62928.azo3425"/>
<dbReference type="KEGG" id="aoa:dqs_3564"/>
<dbReference type="KEGG" id="azo:azo3425"/>
<dbReference type="eggNOG" id="COG0222">
    <property type="taxonomic scope" value="Bacteria"/>
</dbReference>
<dbReference type="HOGENOM" id="CLU_086499_3_2_4"/>
<dbReference type="OrthoDB" id="9811748at2"/>
<dbReference type="Proteomes" id="UP000002588">
    <property type="component" value="Chromosome"/>
</dbReference>
<dbReference type="GO" id="GO:0022625">
    <property type="term" value="C:cytosolic large ribosomal subunit"/>
    <property type="evidence" value="ECO:0007669"/>
    <property type="project" value="TreeGrafter"/>
</dbReference>
<dbReference type="GO" id="GO:0003729">
    <property type="term" value="F:mRNA binding"/>
    <property type="evidence" value="ECO:0007669"/>
    <property type="project" value="TreeGrafter"/>
</dbReference>
<dbReference type="GO" id="GO:0003735">
    <property type="term" value="F:structural constituent of ribosome"/>
    <property type="evidence" value="ECO:0007669"/>
    <property type="project" value="InterPro"/>
</dbReference>
<dbReference type="GO" id="GO:0006412">
    <property type="term" value="P:translation"/>
    <property type="evidence" value="ECO:0007669"/>
    <property type="project" value="UniProtKB-UniRule"/>
</dbReference>
<dbReference type="CDD" id="cd00387">
    <property type="entry name" value="Ribosomal_L7_L12"/>
    <property type="match status" value="1"/>
</dbReference>
<dbReference type="FunFam" id="3.30.1390.10:FF:000001">
    <property type="entry name" value="50S ribosomal protein L7/L12"/>
    <property type="match status" value="1"/>
</dbReference>
<dbReference type="Gene3D" id="3.30.1390.10">
    <property type="match status" value="1"/>
</dbReference>
<dbReference type="Gene3D" id="1.20.5.710">
    <property type="entry name" value="Single helix bin"/>
    <property type="match status" value="1"/>
</dbReference>
<dbReference type="HAMAP" id="MF_00368">
    <property type="entry name" value="Ribosomal_bL12"/>
    <property type="match status" value="1"/>
</dbReference>
<dbReference type="InterPro" id="IPR000206">
    <property type="entry name" value="Ribosomal_bL12"/>
</dbReference>
<dbReference type="InterPro" id="IPR013823">
    <property type="entry name" value="Ribosomal_bL12_C"/>
</dbReference>
<dbReference type="InterPro" id="IPR014719">
    <property type="entry name" value="Ribosomal_bL12_C/ClpS-like"/>
</dbReference>
<dbReference type="InterPro" id="IPR008932">
    <property type="entry name" value="Ribosomal_bL12_oligo"/>
</dbReference>
<dbReference type="InterPro" id="IPR036235">
    <property type="entry name" value="Ribosomal_bL12_oligo_N_sf"/>
</dbReference>
<dbReference type="NCBIfam" id="TIGR00855">
    <property type="entry name" value="L12"/>
    <property type="match status" value="1"/>
</dbReference>
<dbReference type="PANTHER" id="PTHR45987">
    <property type="entry name" value="39S RIBOSOMAL PROTEIN L12"/>
    <property type="match status" value="1"/>
</dbReference>
<dbReference type="PANTHER" id="PTHR45987:SF4">
    <property type="entry name" value="LARGE RIBOSOMAL SUBUNIT PROTEIN BL12M"/>
    <property type="match status" value="1"/>
</dbReference>
<dbReference type="Pfam" id="PF00542">
    <property type="entry name" value="Ribosomal_L12"/>
    <property type="match status" value="1"/>
</dbReference>
<dbReference type="Pfam" id="PF16320">
    <property type="entry name" value="Ribosomal_L12_N"/>
    <property type="match status" value="1"/>
</dbReference>
<dbReference type="SUPFAM" id="SSF54736">
    <property type="entry name" value="ClpS-like"/>
    <property type="match status" value="1"/>
</dbReference>
<dbReference type="SUPFAM" id="SSF48300">
    <property type="entry name" value="Ribosomal protein L7/12, oligomerisation (N-terminal) domain"/>
    <property type="match status" value="1"/>
</dbReference>
<reference key="1">
    <citation type="journal article" date="2006" name="Nat. Biotechnol.">
        <title>Complete genome of the mutualistic, N2-fixing grass endophyte Azoarcus sp. strain BH72.</title>
        <authorList>
            <person name="Krause A."/>
            <person name="Ramakumar A."/>
            <person name="Bartels D."/>
            <person name="Battistoni F."/>
            <person name="Bekel T."/>
            <person name="Boch J."/>
            <person name="Boehm M."/>
            <person name="Friedrich F."/>
            <person name="Hurek T."/>
            <person name="Krause L."/>
            <person name="Linke B."/>
            <person name="McHardy A.C."/>
            <person name="Sarkar A."/>
            <person name="Schneiker S."/>
            <person name="Syed A.A."/>
            <person name="Thauer R."/>
            <person name="Vorhoelter F.-J."/>
            <person name="Weidner S."/>
            <person name="Puehler A."/>
            <person name="Reinhold-Hurek B."/>
            <person name="Kaiser O."/>
            <person name="Goesmann A."/>
        </authorList>
    </citation>
    <scope>NUCLEOTIDE SEQUENCE [LARGE SCALE GENOMIC DNA]</scope>
    <source>
        <strain>BH72</strain>
    </source>
</reference>
<evidence type="ECO:0000255" key="1">
    <source>
        <dbReference type="HAMAP-Rule" id="MF_00368"/>
    </source>
</evidence>
<evidence type="ECO:0000305" key="2"/>
<comment type="function">
    <text evidence="1">Forms part of the ribosomal stalk which helps the ribosome interact with GTP-bound translation factors. Is thus essential for accurate translation.</text>
</comment>
<comment type="subunit">
    <text evidence="1">Homodimer. Part of the ribosomal stalk of the 50S ribosomal subunit. Forms a multimeric L10(L12)X complex, where L10 forms an elongated spine to which 2 to 4 L12 dimers bind in a sequential fashion. Binds GTP-bound translation factors.</text>
</comment>
<comment type="similarity">
    <text evidence="1">Belongs to the bacterial ribosomal protein bL12 family.</text>
</comment>
<proteinExistence type="inferred from homology"/>
<sequence>MAISKDDILEAVGSMTVMELNDLVKAFEEKFGVSAAALAVAAPGAGGAAAPAAEEKTEFDVILTAAGEKKVEVIKVVRAATGLGLKEAKDVVDGAPKAVKEGIAKADAEALKKQLEDAGAKVEIK</sequence>
<protein>
    <recommendedName>
        <fullName evidence="1">Large ribosomal subunit protein bL12</fullName>
    </recommendedName>
    <alternativeName>
        <fullName evidence="2">50S ribosomal protein L7/L12</fullName>
    </alternativeName>
</protein>
<name>RL7_AZOSB</name>
<accession>A1KB35</accession>